<comment type="function">
    <text evidence="1">Specifically methylates the pseudouridine at position 1915 (m3Psi1915) in 23S rRNA.</text>
</comment>
<comment type="catalytic activity">
    <reaction evidence="1">
        <text>pseudouridine(1915) in 23S rRNA + S-adenosyl-L-methionine = N(3)-methylpseudouridine(1915) in 23S rRNA + S-adenosyl-L-homocysteine + H(+)</text>
        <dbReference type="Rhea" id="RHEA:42752"/>
        <dbReference type="Rhea" id="RHEA-COMP:10221"/>
        <dbReference type="Rhea" id="RHEA-COMP:10222"/>
        <dbReference type="ChEBI" id="CHEBI:15378"/>
        <dbReference type="ChEBI" id="CHEBI:57856"/>
        <dbReference type="ChEBI" id="CHEBI:59789"/>
        <dbReference type="ChEBI" id="CHEBI:65314"/>
        <dbReference type="ChEBI" id="CHEBI:74486"/>
        <dbReference type="EC" id="2.1.1.177"/>
    </reaction>
</comment>
<comment type="subunit">
    <text evidence="1">Homodimer.</text>
</comment>
<comment type="subcellular location">
    <subcellularLocation>
        <location evidence="1">Cytoplasm</location>
    </subcellularLocation>
</comment>
<comment type="similarity">
    <text evidence="1">Belongs to the RNA methyltransferase RlmH family.</text>
</comment>
<keyword id="KW-0963">Cytoplasm</keyword>
<keyword id="KW-0489">Methyltransferase</keyword>
<keyword id="KW-0698">rRNA processing</keyword>
<keyword id="KW-0949">S-adenosyl-L-methionine</keyword>
<keyword id="KW-0808">Transferase</keyword>
<sequence length="159" mass="18306">MKITILAVGKLKEKYWKQAIAEYEKRLGPYTKIDIIEVPDEKAPENMSDKEIEQVKEKEGQRILAKIKPQSTVITLEIQGKMLSSEGLAQELNQRMTQGQSDFVFVIGGSNGLHKDVLQRSNYALSFSKMTFPHQMMRVVLIEQVYRAFKIMRGEAYHK</sequence>
<reference key="1">
    <citation type="journal article" date="2008" name="Antimicrob. Agents Chemother.">
        <title>Mutated response regulator graR is responsible for phenotypic conversion of Staphylococcus aureus from heterogeneous vancomycin-intermediate resistance to vancomycin-intermediate resistance.</title>
        <authorList>
            <person name="Neoh H.-M."/>
            <person name="Cui L."/>
            <person name="Yuzawa H."/>
            <person name="Takeuchi F."/>
            <person name="Matsuo M."/>
            <person name="Hiramatsu K."/>
        </authorList>
    </citation>
    <scope>NUCLEOTIDE SEQUENCE [LARGE SCALE GENOMIC DNA]</scope>
    <source>
        <strain>Mu3 / ATCC 700698</strain>
    </source>
</reference>
<name>RLMH_STAA1</name>
<evidence type="ECO:0000255" key="1">
    <source>
        <dbReference type="HAMAP-Rule" id="MF_00658"/>
    </source>
</evidence>
<protein>
    <recommendedName>
        <fullName evidence="1">Ribosomal RNA large subunit methyltransferase H</fullName>
        <ecNumber evidence="1">2.1.1.177</ecNumber>
    </recommendedName>
    <alternativeName>
        <fullName evidence="1">23S rRNA (pseudouridine1915-N3)-methyltransferase</fullName>
    </alternativeName>
    <alternativeName>
        <fullName evidence="1">23S rRNA m3Psi1915 methyltransferase</fullName>
    </alternativeName>
    <alternativeName>
        <fullName evidence="1">rRNA (pseudouridine-N3-)-methyltransferase RlmH</fullName>
    </alternativeName>
</protein>
<feature type="chain" id="PRO_1000061846" description="Ribosomal RNA large subunit methyltransferase H">
    <location>
        <begin position="1"/>
        <end position="159"/>
    </location>
</feature>
<feature type="binding site" evidence="1">
    <location>
        <position position="76"/>
    </location>
    <ligand>
        <name>S-adenosyl-L-methionine</name>
        <dbReference type="ChEBI" id="CHEBI:59789"/>
    </ligand>
</feature>
<feature type="binding site" evidence="1">
    <location>
        <position position="108"/>
    </location>
    <ligand>
        <name>S-adenosyl-L-methionine</name>
        <dbReference type="ChEBI" id="CHEBI:59789"/>
    </ligand>
</feature>
<feature type="binding site" evidence="1">
    <location>
        <begin position="127"/>
        <end position="132"/>
    </location>
    <ligand>
        <name>S-adenosyl-L-methionine</name>
        <dbReference type="ChEBI" id="CHEBI:59789"/>
    </ligand>
</feature>
<gene>
    <name evidence="1" type="primary">rlmH</name>
    <name type="ordered locus">SAHV_0024</name>
</gene>
<proteinExistence type="inferred from homology"/>
<accession>A7WWR5</accession>
<organism>
    <name type="scientific">Staphylococcus aureus (strain Mu3 / ATCC 700698)</name>
    <dbReference type="NCBI Taxonomy" id="418127"/>
    <lineage>
        <taxon>Bacteria</taxon>
        <taxon>Bacillati</taxon>
        <taxon>Bacillota</taxon>
        <taxon>Bacilli</taxon>
        <taxon>Bacillales</taxon>
        <taxon>Staphylococcaceae</taxon>
        <taxon>Staphylococcus</taxon>
    </lineage>
</organism>
<dbReference type="EC" id="2.1.1.177" evidence="1"/>
<dbReference type="EMBL" id="AP009324">
    <property type="protein sequence ID" value="BAF76907.1"/>
    <property type="molecule type" value="Genomic_DNA"/>
</dbReference>
<dbReference type="RefSeq" id="WP_000704775.1">
    <property type="nucleotide sequence ID" value="NZ_CTYB01000065.1"/>
</dbReference>
<dbReference type="SMR" id="A7WWR5"/>
<dbReference type="GeneID" id="98344407"/>
<dbReference type="KEGG" id="saw:SAHV_0024"/>
<dbReference type="HOGENOM" id="CLU_100552_0_0_9"/>
<dbReference type="GO" id="GO:0005737">
    <property type="term" value="C:cytoplasm"/>
    <property type="evidence" value="ECO:0007669"/>
    <property type="project" value="UniProtKB-SubCell"/>
</dbReference>
<dbReference type="GO" id="GO:0070038">
    <property type="term" value="F:rRNA (pseudouridine-N3-)-methyltransferase activity"/>
    <property type="evidence" value="ECO:0007669"/>
    <property type="project" value="UniProtKB-UniRule"/>
</dbReference>
<dbReference type="CDD" id="cd18081">
    <property type="entry name" value="RlmH-like"/>
    <property type="match status" value="1"/>
</dbReference>
<dbReference type="Gene3D" id="3.40.1280.10">
    <property type="match status" value="1"/>
</dbReference>
<dbReference type="HAMAP" id="MF_00658">
    <property type="entry name" value="23SrRNA_methyltr_H"/>
    <property type="match status" value="1"/>
</dbReference>
<dbReference type="InterPro" id="IPR029028">
    <property type="entry name" value="Alpha/beta_knot_MTases"/>
</dbReference>
<dbReference type="InterPro" id="IPR003742">
    <property type="entry name" value="RlmH-like"/>
</dbReference>
<dbReference type="InterPro" id="IPR029026">
    <property type="entry name" value="tRNA_m1G_MTases_N"/>
</dbReference>
<dbReference type="NCBIfam" id="NF000985">
    <property type="entry name" value="PRK00103.1-3"/>
    <property type="match status" value="1"/>
</dbReference>
<dbReference type="NCBIfam" id="NF000986">
    <property type="entry name" value="PRK00103.1-4"/>
    <property type="match status" value="1"/>
</dbReference>
<dbReference type="NCBIfam" id="TIGR00246">
    <property type="entry name" value="tRNA_RlmH_YbeA"/>
    <property type="match status" value="1"/>
</dbReference>
<dbReference type="PANTHER" id="PTHR33603">
    <property type="entry name" value="METHYLTRANSFERASE"/>
    <property type="match status" value="1"/>
</dbReference>
<dbReference type="PANTHER" id="PTHR33603:SF1">
    <property type="entry name" value="RIBOSOMAL RNA LARGE SUBUNIT METHYLTRANSFERASE H"/>
    <property type="match status" value="1"/>
</dbReference>
<dbReference type="Pfam" id="PF02590">
    <property type="entry name" value="SPOUT_MTase"/>
    <property type="match status" value="1"/>
</dbReference>
<dbReference type="PIRSF" id="PIRSF004505">
    <property type="entry name" value="MT_bac"/>
    <property type="match status" value="1"/>
</dbReference>
<dbReference type="SUPFAM" id="SSF75217">
    <property type="entry name" value="alpha/beta knot"/>
    <property type="match status" value="1"/>
</dbReference>